<comment type="function">
    <text evidence="1">Probable transcriptional regulator that acts as a repressor of the gibberellin (GA) signaling pathway. Probably acts by participating in large multiprotein complexes that represses transcription of GA-inducible genes. Upon GA application, it is degraded by the proteasome, allowing the GA signaling pathway (By similarity).</text>
</comment>
<comment type="subcellular location">
    <subcellularLocation>
        <location evidence="1">Nucleus</location>
    </subcellularLocation>
</comment>
<comment type="domain">
    <text evidence="1">The DELLA motif is required for its GA-induced degradation.</text>
</comment>
<comment type="PTM">
    <text evidence="1">Phosphorylated.</text>
</comment>
<comment type="PTM">
    <text evidence="1">Ubiquitinated. Upon GA application it is ubiquitinated, leading to its subsequent degradation (By similarity).</text>
</comment>
<comment type="similarity">
    <text evidence="4">Belongs to the GRAS family. DELLA subfamily.</text>
</comment>
<sequence>MKRDLHQFQGPPDTRFPNHGTANTGSSSKDKMMMVKEEEDGGNMDELLAVLGYKVRSSEMAEVALKLEQLETMMGNVQEDGLSNLATDTVHYNPSELYSWLDNMLTEFNPPPPEINNSFLAGAGGSDYDLKAIPGNAIYARSDQFAIDSSSSSNQAGDNSQSTKRLKSCSSPDSLVTGTTVTTTTTESTRSVGLAAESTRSMVLVDSQENGVRLVHALMACAEAIQNNDLSIAEALVKQIGFLAVSQAGAMRKVATYFAEALARRIYRLSPPQTQIDHSLSDTLQMHFYETCPYLKFAHFTANQAILEAFEGKKRVHVIDFSMNQGLQWPALMQALALREGGPPVFRLTGIGPPAADNSDHLHEVGCKLAQLAEAIHVEFEYRGFVANSLADLDASMLELRPSEIEAVAVNSVFELHKLLGRTGGIEKVLGVVKQIKPVIFTVVEQESSHNGPVFLDRFTESLHYYSTLFDSLEGVPSSQDKVMSEVYLGKQICNLVACEGPDRVERHETLSQWANRFGSSGFAPAHLGSNAFKQASMLLALFNGGEGYRVEENNGCLMLGWHTRPLITTSAWKLSAAH</sequence>
<gene>
    <name type="primary">RGA2</name>
</gene>
<name>RGA2_BRACM</name>
<reference key="1">
    <citation type="journal article" date="2005" name="Plant Physiol.">
        <title>A novel dwarfing mutation in a green revolution gene from Brassica rapa.</title>
        <authorList>
            <person name="Muangprom A."/>
            <person name="Thomas S.-G."/>
            <person name="Sun T.-P."/>
            <person name="Osborn T.C."/>
        </authorList>
    </citation>
    <scope>NUCLEOTIDE SEQUENCE [GENOMIC DNA]</scope>
</reference>
<organism>
    <name type="scientific">Brassica campestris</name>
    <name type="common">Field mustard</name>
    <dbReference type="NCBI Taxonomy" id="3711"/>
    <lineage>
        <taxon>Eukaryota</taxon>
        <taxon>Viridiplantae</taxon>
        <taxon>Streptophyta</taxon>
        <taxon>Embryophyta</taxon>
        <taxon>Tracheophyta</taxon>
        <taxon>Spermatophyta</taxon>
        <taxon>Magnoliopsida</taxon>
        <taxon>eudicotyledons</taxon>
        <taxon>Gunneridae</taxon>
        <taxon>Pentapetalae</taxon>
        <taxon>rosids</taxon>
        <taxon>malvids</taxon>
        <taxon>Brassicales</taxon>
        <taxon>Brassicaceae</taxon>
        <taxon>Brassiceae</taxon>
        <taxon>Brassica</taxon>
    </lineage>
</organism>
<keyword id="KW-0939">Gibberellin signaling pathway</keyword>
<keyword id="KW-0539">Nucleus</keyword>
<keyword id="KW-0597">Phosphoprotein</keyword>
<keyword id="KW-1185">Reference proteome</keyword>
<keyword id="KW-0678">Repressor</keyword>
<keyword id="KW-0804">Transcription</keyword>
<keyword id="KW-0805">Transcription regulation</keyword>
<keyword id="KW-0832">Ubl conjugation</keyword>
<dbReference type="EMBL" id="AY928550">
    <property type="protein sequence ID" value="AAX33298.1"/>
    <property type="molecule type" value="Genomic_DNA"/>
</dbReference>
<dbReference type="SMR" id="Q5BN22"/>
<dbReference type="Proteomes" id="UP000011750">
    <property type="component" value="Unplaced"/>
</dbReference>
<dbReference type="GO" id="GO:0005634">
    <property type="term" value="C:nucleus"/>
    <property type="evidence" value="ECO:0000318"/>
    <property type="project" value="GO_Central"/>
</dbReference>
<dbReference type="GO" id="GO:0003700">
    <property type="term" value="F:DNA-binding transcription factor activity"/>
    <property type="evidence" value="ECO:0000318"/>
    <property type="project" value="GO_Central"/>
</dbReference>
<dbReference type="GO" id="GO:0043565">
    <property type="term" value="F:sequence-specific DNA binding"/>
    <property type="evidence" value="ECO:0000318"/>
    <property type="project" value="GO_Central"/>
</dbReference>
<dbReference type="GO" id="GO:0009740">
    <property type="term" value="P:gibberellic acid mediated signaling pathway"/>
    <property type="evidence" value="ECO:0007669"/>
    <property type="project" value="UniProtKB-KW"/>
</dbReference>
<dbReference type="GO" id="GO:0042538">
    <property type="term" value="P:hyperosmotic salinity response"/>
    <property type="evidence" value="ECO:0000318"/>
    <property type="project" value="GO_Central"/>
</dbReference>
<dbReference type="GO" id="GO:0009867">
    <property type="term" value="P:jasmonic acid mediated signaling pathway"/>
    <property type="evidence" value="ECO:0000318"/>
    <property type="project" value="GO_Central"/>
</dbReference>
<dbReference type="GO" id="GO:0009938">
    <property type="term" value="P:negative regulation of gibberellic acid mediated signaling pathway"/>
    <property type="evidence" value="ECO:0000318"/>
    <property type="project" value="GO_Central"/>
</dbReference>
<dbReference type="GO" id="GO:0010187">
    <property type="term" value="P:negative regulation of seed germination"/>
    <property type="evidence" value="ECO:0000318"/>
    <property type="project" value="GO_Central"/>
</dbReference>
<dbReference type="GO" id="GO:0006355">
    <property type="term" value="P:regulation of DNA-templated transcription"/>
    <property type="evidence" value="ECO:0000318"/>
    <property type="project" value="GO_Central"/>
</dbReference>
<dbReference type="GO" id="GO:2000377">
    <property type="term" value="P:regulation of reactive oxygen species metabolic process"/>
    <property type="evidence" value="ECO:0000318"/>
    <property type="project" value="GO_Central"/>
</dbReference>
<dbReference type="GO" id="GO:2000033">
    <property type="term" value="P:regulation of seed dormancy process"/>
    <property type="evidence" value="ECO:0000318"/>
    <property type="project" value="GO_Central"/>
</dbReference>
<dbReference type="GO" id="GO:0009737">
    <property type="term" value="P:response to abscisic acid"/>
    <property type="evidence" value="ECO:0000318"/>
    <property type="project" value="GO_Central"/>
</dbReference>
<dbReference type="GO" id="GO:0009723">
    <property type="term" value="P:response to ethylene"/>
    <property type="evidence" value="ECO:0000318"/>
    <property type="project" value="GO_Central"/>
</dbReference>
<dbReference type="GO" id="GO:0009863">
    <property type="term" value="P:salicylic acid mediated signaling pathway"/>
    <property type="evidence" value="ECO:0000318"/>
    <property type="project" value="GO_Central"/>
</dbReference>
<dbReference type="FunFam" id="1.10.10.1290:FF:000001">
    <property type="entry name" value="DELLA protein GAI"/>
    <property type="match status" value="1"/>
</dbReference>
<dbReference type="Gene3D" id="1.10.10.1290">
    <property type="entry name" value="Transcriptional regulator DELLA, N-terminal domain"/>
    <property type="match status" value="1"/>
</dbReference>
<dbReference type="InterPro" id="IPR038088">
    <property type="entry name" value="DELLA_N_sf"/>
</dbReference>
<dbReference type="InterPro" id="IPR021914">
    <property type="entry name" value="TF_DELLA_N"/>
</dbReference>
<dbReference type="InterPro" id="IPR005202">
    <property type="entry name" value="TF_GRAS"/>
</dbReference>
<dbReference type="PANTHER" id="PTHR31636">
    <property type="entry name" value="OSJNBA0084A10.13 PROTEIN-RELATED"/>
    <property type="match status" value="1"/>
</dbReference>
<dbReference type="Pfam" id="PF12041">
    <property type="entry name" value="DELLA"/>
    <property type="match status" value="1"/>
</dbReference>
<dbReference type="Pfam" id="PF03514">
    <property type="entry name" value="GRAS"/>
    <property type="match status" value="1"/>
</dbReference>
<dbReference type="SMART" id="SM01129">
    <property type="entry name" value="DELLA"/>
    <property type="match status" value="1"/>
</dbReference>
<dbReference type="PROSITE" id="PS50985">
    <property type="entry name" value="GRAS"/>
    <property type="match status" value="1"/>
</dbReference>
<evidence type="ECO:0000250" key="1"/>
<evidence type="ECO:0000255" key="2">
    <source>
        <dbReference type="PROSITE-ProRule" id="PRU01191"/>
    </source>
</evidence>
<evidence type="ECO:0000256" key="3">
    <source>
        <dbReference type="SAM" id="MobiDB-lite"/>
    </source>
</evidence>
<evidence type="ECO:0000305" key="4"/>
<feature type="chain" id="PRO_0000132240" description="DELLA protein RGA2">
    <location>
        <begin position="1"/>
        <end position="579"/>
    </location>
</feature>
<feature type="domain" description="GRAS" evidence="2">
    <location>
        <begin position="205"/>
        <end position="574"/>
    </location>
</feature>
<feature type="region of interest" description="Disordered" evidence="3">
    <location>
        <begin position="1"/>
        <end position="31"/>
    </location>
</feature>
<feature type="region of interest" description="Disordered" evidence="3">
    <location>
        <begin position="149"/>
        <end position="183"/>
    </location>
</feature>
<feature type="region of interest" description="Leucine repeat I (LRI)" evidence="2">
    <location>
        <begin position="212"/>
        <end position="266"/>
    </location>
</feature>
<feature type="region of interest" description="VHIID" evidence="2">
    <location>
        <begin position="285"/>
        <end position="350"/>
    </location>
</feature>
<feature type="region of interest" description="Leucine repeat II (LRII)" evidence="2">
    <location>
        <begin position="364"/>
        <end position="396"/>
    </location>
</feature>
<feature type="region of interest" description="PFYRE" evidence="2">
    <location>
        <begin position="408"/>
        <end position="495"/>
    </location>
</feature>
<feature type="region of interest" description="SAW" evidence="2">
    <location>
        <begin position="498"/>
        <end position="574"/>
    </location>
</feature>
<feature type="short sequence motif" description="DELLA motif">
    <location>
        <begin position="45"/>
        <end position="49"/>
    </location>
</feature>
<feature type="short sequence motif" description="VHIID" evidence="2">
    <location>
        <begin position="316"/>
        <end position="320"/>
    </location>
</feature>
<feature type="short sequence motif" description="LXXLL motif" evidence="2">
    <location>
        <begin position="416"/>
        <end position="420"/>
    </location>
</feature>
<feature type="compositionally biased region" description="Low complexity" evidence="3">
    <location>
        <begin position="149"/>
        <end position="162"/>
    </location>
</feature>
<feature type="compositionally biased region" description="Low complexity" evidence="3">
    <location>
        <begin position="174"/>
        <end position="183"/>
    </location>
</feature>
<protein>
    <recommendedName>
        <fullName>DELLA protein RGA2</fullName>
    </recommendedName>
    <alternativeName>
        <fullName>BrRGA2</fullName>
    </alternativeName>
    <alternativeName>
        <fullName>RGA-like protein 2</fullName>
    </alternativeName>
</protein>
<accession>Q5BN22</accession>
<proteinExistence type="inferred from homology"/>